<name>RL18_ACISJ</name>
<dbReference type="EMBL" id="CP000539">
    <property type="protein sequence ID" value="ABM40649.1"/>
    <property type="molecule type" value="Genomic_DNA"/>
</dbReference>
<dbReference type="SMR" id="A1W324"/>
<dbReference type="STRING" id="232721.Ajs_0397"/>
<dbReference type="KEGG" id="ajs:Ajs_0397"/>
<dbReference type="eggNOG" id="COG0256">
    <property type="taxonomic scope" value="Bacteria"/>
</dbReference>
<dbReference type="HOGENOM" id="CLU_098841_0_1_4"/>
<dbReference type="Proteomes" id="UP000000645">
    <property type="component" value="Chromosome"/>
</dbReference>
<dbReference type="GO" id="GO:0022625">
    <property type="term" value="C:cytosolic large ribosomal subunit"/>
    <property type="evidence" value="ECO:0007669"/>
    <property type="project" value="TreeGrafter"/>
</dbReference>
<dbReference type="GO" id="GO:0008097">
    <property type="term" value="F:5S rRNA binding"/>
    <property type="evidence" value="ECO:0007669"/>
    <property type="project" value="TreeGrafter"/>
</dbReference>
<dbReference type="GO" id="GO:0003735">
    <property type="term" value="F:structural constituent of ribosome"/>
    <property type="evidence" value="ECO:0007669"/>
    <property type="project" value="InterPro"/>
</dbReference>
<dbReference type="GO" id="GO:0006412">
    <property type="term" value="P:translation"/>
    <property type="evidence" value="ECO:0007669"/>
    <property type="project" value="UniProtKB-UniRule"/>
</dbReference>
<dbReference type="CDD" id="cd00432">
    <property type="entry name" value="Ribosomal_L18_L5e"/>
    <property type="match status" value="1"/>
</dbReference>
<dbReference type="FunFam" id="3.30.420.100:FF:000001">
    <property type="entry name" value="50S ribosomal protein L18"/>
    <property type="match status" value="1"/>
</dbReference>
<dbReference type="Gene3D" id="3.30.420.100">
    <property type="match status" value="1"/>
</dbReference>
<dbReference type="HAMAP" id="MF_01337_B">
    <property type="entry name" value="Ribosomal_uL18_B"/>
    <property type="match status" value="1"/>
</dbReference>
<dbReference type="InterPro" id="IPR004389">
    <property type="entry name" value="Ribosomal_uL18_bac-type"/>
</dbReference>
<dbReference type="InterPro" id="IPR005484">
    <property type="entry name" value="Ribosomal_uL18_bac/euk"/>
</dbReference>
<dbReference type="NCBIfam" id="TIGR00060">
    <property type="entry name" value="L18_bact"/>
    <property type="match status" value="1"/>
</dbReference>
<dbReference type="PANTHER" id="PTHR12899">
    <property type="entry name" value="39S RIBOSOMAL PROTEIN L18, MITOCHONDRIAL"/>
    <property type="match status" value="1"/>
</dbReference>
<dbReference type="PANTHER" id="PTHR12899:SF3">
    <property type="entry name" value="LARGE RIBOSOMAL SUBUNIT PROTEIN UL18M"/>
    <property type="match status" value="1"/>
</dbReference>
<dbReference type="Pfam" id="PF00861">
    <property type="entry name" value="Ribosomal_L18p"/>
    <property type="match status" value="1"/>
</dbReference>
<dbReference type="SUPFAM" id="SSF53137">
    <property type="entry name" value="Translational machinery components"/>
    <property type="match status" value="1"/>
</dbReference>
<sequence length="121" mass="12774">MLTKKEQRLRRARQTRIRIAQQGVARLTVNRTNLHIYASVISGDGSKVLASASTAEADVRKSLGGSGKGGNAAAAQIIGKRIAEKAKAAGVEKVAFDRAGFAYHGRVKALADAAREAGLQF</sequence>
<reference key="1">
    <citation type="submission" date="2006-12" db="EMBL/GenBank/DDBJ databases">
        <title>Complete sequence of chromosome 1 of Acidovorax sp. JS42.</title>
        <authorList>
            <person name="Copeland A."/>
            <person name="Lucas S."/>
            <person name="Lapidus A."/>
            <person name="Barry K."/>
            <person name="Detter J.C."/>
            <person name="Glavina del Rio T."/>
            <person name="Dalin E."/>
            <person name="Tice H."/>
            <person name="Pitluck S."/>
            <person name="Chertkov O."/>
            <person name="Brettin T."/>
            <person name="Bruce D."/>
            <person name="Han C."/>
            <person name="Tapia R."/>
            <person name="Gilna P."/>
            <person name="Schmutz J."/>
            <person name="Larimer F."/>
            <person name="Land M."/>
            <person name="Hauser L."/>
            <person name="Kyrpides N."/>
            <person name="Kim E."/>
            <person name="Stahl D."/>
            <person name="Richardson P."/>
        </authorList>
    </citation>
    <scope>NUCLEOTIDE SEQUENCE [LARGE SCALE GENOMIC DNA]</scope>
    <source>
        <strain>JS42</strain>
    </source>
</reference>
<keyword id="KW-0687">Ribonucleoprotein</keyword>
<keyword id="KW-0689">Ribosomal protein</keyword>
<keyword id="KW-0694">RNA-binding</keyword>
<keyword id="KW-0699">rRNA-binding</keyword>
<feature type="chain" id="PRO_1000052979" description="Large ribosomal subunit protein uL18">
    <location>
        <begin position="1"/>
        <end position="121"/>
    </location>
</feature>
<evidence type="ECO:0000255" key="1">
    <source>
        <dbReference type="HAMAP-Rule" id="MF_01337"/>
    </source>
</evidence>
<evidence type="ECO:0000305" key="2"/>
<comment type="function">
    <text evidence="1">This is one of the proteins that bind and probably mediate the attachment of the 5S RNA into the large ribosomal subunit, where it forms part of the central protuberance.</text>
</comment>
<comment type="subunit">
    <text evidence="1">Part of the 50S ribosomal subunit; part of the 5S rRNA/L5/L18/L25 subcomplex. Contacts the 5S and 23S rRNAs.</text>
</comment>
<comment type="similarity">
    <text evidence="1">Belongs to the universal ribosomal protein uL18 family.</text>
</comment>
<gene>
    <name evidence="1" type="primary">rplR</name>
    <name type="ordered locus">Ajs_0397</name>
</gene>
<accession>A1W324</accession>
<proteinExistence type="inferred from homology"/>
<protein>
    <recommendedName>
        <fullName evidence="1">Large ribosomal subunit protein uL18</fullName>
    </recommendedName>
    <alternativeName>
        <fullName evidence="2">50S ribosomal protein L18</fullName>
    </alternativeName>
</protein>
<organism>
    <name type="scientific">Acidovorax sp. (strain JS42)</name>
    <dbReference type="NCBI Taxonomy" id="232721"/>
    <lineage>
        <taxon>Bacteria</taxon>
        <taxon>Pseudomonadati</taxon>
        <taxon>Pseudomonadota</taxon>
        <taxon>Betaproteobacteria</taxon>
        <taxon>Burkholderiales</taxon>
        <taxon>Comamonadaceae</taxon>
        <taxon>Acidovorax</taxon>
    </lineage>
</organism>